<feature type="initiator methionine" description="Removed" evidence="3">
    <location>
        <position position="1"/>
    </location>
</feature>
<feature type="chain" id="PRO_0000203690" description="Guanine nucleotide-binding protein G(i) subunit alpha-3">
    <location>
        <begin position="2"/>
        <end position="354"/>
    </location>
</feature>
<feature type="domain" description="G-alpha" evidence="5">
    <location>
        <begin position="32"/>
        <end position="354"/>
    </location>
</feature>
<feature type="region of interest" description="G1 motif" evidence="5">
    <location>
        <begin position="35"/>
        <end position="48"/>
    </location>
</feature>
<feature type="region of interest" description="G2 motif" evidence="5">
    <location>
        <begin position="173"/>
        <end position="181"/>
    </location>
</feature>
<feature type="region of interest" description="G3 motif" evidence="5">
    <location>
        <begin position="196"/>
        <end position="205"/>
    </location>
</feature>
<feature type="region of interest" description="G4 motif" evidence="5">
    <location>
        <begin position="265"/>
        <end position="272"/>
    </location>
</feature>
<feature type="region of interest" description="G5 motif" evidence="5">
    <location>
        <begin position="324"/>
        <end position="329"/>
    </location>
</feature>
<feature type="binding site" evidence="3">
    <location>
        <position position="42"/>
    </location>
    <ligand>
        <name>GTP</name>
        <dbReference type="ChEBI" id="CHEBI:37565"/>
    </ligand>
</feature>
<feature type="binding site" evidence="3">
    <location>
        <position position="43"/>
    </location>
    <ligand>
        <name>GTP</name>
        <dbReference type="ChEBI" id="CHEBI:37565"/>
    </ligand>
</feature>
<feature type="binding site" evidence="3">
    <location>
        <position position="44"/>
    </location>
    <ligand>
        <name>GTP</name>
        <dbReference type="ChEBI" id="CHEBI:37565"/>
    </ligand>
</feature>
<feature type="binding site" evidence="3">
    <location>
        <position position="45"/>
    </location>
    <ligand>
        <name>GTP</name>
        <dbReference type="ChEBI" id="CHEBI:37565"/>
    </ligand>
</feature>
<feature type="binding site" evidence="3">
    <location>
        <position position="46"/>
    </location>
    <ligand>
        <name>GTP</name>
        <dbReference type="ChEBI" id="CHEBI:37565"/>
    </ligand>
</feature>
<feature type="binding site" evidence="3">
    <location>
        <position position="47"/>
    </location>
    <ligand>
        <name>GTP</name>
        <dbReference type="ChEBI" id="CHEBI:37565"/>
    </ligand>
</feature>
<feature type="binding site" evidence="3">
    <location>
        <position position="47"/>
    </location>
    <ligand>
        <name>Mg(2+)</name>
        <dbReference type="ChEBI" id="CHEBI:18420"/>
    </ligand>
</feature>
<feature type="binding site" evidence="3">
    <location>
        <position position="48"/>
    </location>
    <ligand>
        <name>GTP</name>
        <dbReference type="ChEBI" id="CHEBI:37565"/>
    </ligand>
</feature>
<feature type="binding site" evidence="3">
    <location>
        <position position="150"/>
    </location>
    <ligand>
        <name>GTP</name>
        <dbReference type="ChEBI" id="CHEBI:37565"/>
    </ligand>
</feature>
<feature type="binding site" evidence="3">
    <location>
        <position position="151"/>
    </location>
    <ligand>
        <name>GTP</name>
        <dbReference type="ChEBI" id="CHEBI:37565"/>
    </ligand>
</feature>
<feature type="binding site" evidence="3">
    <location>
        <position position="175"/>
    </location>
    <ligand>
        <name>GTP</name>
        <dbReference type="ChEBI" id="CHEBI:37565"/>
    </ligand>
</feature>
<feature type="binding site" evidence="3">
    <location>
        <position position="176"/>
    </location>
    <ligand>
        <name>GTP</name>
        <dbReference type="ChEBI" id="CHEBI:37565"/>
    </ligand>
</feature>
<feature type="binding site" evidence="3">
    <location>
        <position position="177"/>
    </location>
    <ligand>
        <name>GTP</name>
        <dbReference type="ChEBI" id="CHEBI:37565"/>
    </ligand>
</feature>
<feature type="binding site" evidence="3">
    <location>
        <position position="178"/>
    </location>
    <ligand>
        <name>GTP</name>
        <dbReference type="ChEBI" id="CHEBI:37565"/>
    </ligand>
</feature>
<feature type="binding site" evidence="3">
    <location>
        <position position="179"/>
    </location>
    <ligand>
        <name>GTP</name>
        <dbReference type="ChEBI" id="CHEBI:37565"/>
    </ligand>
</feature>
<feature type="binding site" evidence="3">
    <location>
        <position position="180"/>
    </location>
    <ligand>
        <name>GTP</name>
        <dbReference type="ChEBI" id="CHEBI:37565"/>
    </ligand>
</feature>
<feature type="binding site" evidence="3">
    <location>
        <position position="181"/>
    </location>
    <ligand>
        <name>GTP</name>
        <dbReference type="ChEBI" id="CHEBI:37565"/>
    </ligand>
</feature>
<feature type="binding site" evidence="3">
    <location>
        <position position="181"/>
    </location>
    <ligand>
        <name>Mg(2+)</name>
        <dbReference type="ChEBI" id="CHEBI:18420"/>
    </ligand>
</feature>
<feature type="binding site" evidence="3">
    <location>
        <position position="201"/>
    </location>
    <ligand>
        <name>GTP</name>
        <dbReference type="ChEBI" id="CHEBI:37565"/>
    </ligand>
</feature>
<feature type="binding site" evidence="3">
    <location>
        <position position="203"/>
    </location>
    <ligand>
        <name>GTP</name>
        <dbReference type="ChEBI" id="CHEBI:37565"/>
    </ligand>
</feature>
<feature type="binding site" evidence="3">
    <location>
        <position position="269"/>
    </location>
    <ligand>
        <name>GTP</name>
        <dbReference type="ChEBI" id="CHEBI:37565"/>
    </ligand>
</feature>
<feature type="binding site" evidence="3">
    <location>
        <position position="270"/>
    </location>
    <ligand>
        <name>GTP</name>
        <dbReference type="ChEBI" id="CHEBI:37565"/>
    </ligand>
</feature>
<feature type="binding site" evidence="3">
    <location>
        <position position="272"/>
    </location>
    <ligand>
        <name>GTP</name>
        <dbReference type="ChEBI" id="CHEBI:37565"/>
    </ligand>
</feature>
<feature type="binding site" evidence="3">
    <location>
        <position position="273"/>
    </location>
    <ligand>
        <name>GTP</name>
        <dbReference type="ChEBI" id="CHEBI:37565"/>
    </ligand>
</feature>
<feature type="binding site" evidence="3">
    <location>
        <position position="325"/>
    </location>
    <ligand>
        <name>GTP</name>
        <dbReference type="ChEBI" id="CHEBI:37565"/>
    </ligand>
</feature>
<feature type="binding site" evidence="3">
    <location>
        <position position="326"/>
    </location>
    <ligand>
        <name>GTP</name>
        <dbReference type="ChEBI" id="CHEBI:37565"/>
    </ligand>
</feature>
<feature type="binding site" evidence="3">
    <location>
        <position position="327"/>
    </location>
    <ligand>
        <name>GTP</name>
        <dbReference type="ChEBI" id="CHEBI:37565"/>
    </ligand>
</feature>
<feature type="lipid moiety-binding region" description="N-myristoyl glycine" evidence="3">
    <location>
        <position position="2"/>
    </location>
</feature>
<feature type="lipid moiety-binding region" description="S-palmitoyl cysteine" evidence="1">
    <location>
        <position position="3"/>
    </location>
</feature>
<comment type="function">
    <text evidence="2 3">Heterotrimeric guanine nucleotide-binding proteins (G proteins) function as transducers downstream of G protein-coupled receptors (GPCRs) in numerous signaling cascades. The alpha chain contains the guanine nucleotide binding site and alternates between an active, GTP-bound state and an inactive, GDP-bound state. Signaling by an activated GPCR promotes GDP release and GTP binding. The alpha subunit has a low GTPase activity that converts bound GTP to GDP, thereby terminating the signal (By similarity). Both GDP release and GTP hydrolysis are modulated by numerous regulatory proteins (By similarity). Signaling is mediated via effector proteins, such as adenylate cyclase. Inhibits adenylate cyclase activity, leading to decreased intracellular cAMP levels (By similarity). Stimulates the activity of receptor-regulated K(+) channels (By similarity). The active GTP-bound form prevents the association of RGS14 with centrosomes and is required for the translocation of RGS14 from the cytoplasm to the plasma membrane. May play a role in cell division (By similarity). The active GTP-bound form activates the calcium permeant TRPC5 ion channels (By similarity).</text>
</comment>
<comment type="subunit">
    <text evidence="2 3 4">Heterotrimeric G proteins are composed of 3 units; alpha, beta and gamma. The alpha subunit contains the guanine nucleotide binding site (By similarity). GTP binding causes dissociation of the heterotrimer, liberating the individual subunits so that they can interact with downstream effector proteins. Forms a complex with CCDC88A/GIV and EGFR which leads to enhanced EGFR signaling and triggering of cell migration; ligand stimulation is required for recruitment of GNAI3 to the complex (By similarity). Interacts (inactive GDP-bound form) with CCDC88A/GIV (via GBA motif); the interaction leads to activation of GNAI3 (By similarity). Interacts (inactive GDP-bound form) with CCDC88C/DAPLE (via GBA motif); the interaction leads to activation of GNAI3 (By similarity). Interacts (inactive GDP-bound form) with NUCB1 (via GBA motif) and NUCB2 (via GBA motif); the interaction leads to activation of GNAI3 (By similarity). Interacts (inactive GDP-bound form) with PLCD4 (via GBA motif); the interaction leads to activation of GNAI3 (By similarity). Interacts with INSR; the interaction is probably mediated by CCDC88A/GIV (By similarity). Interacts with GPSM1 (By similarity). Interacts (GDP-bound form) with GPSM2 (via GoLoco domains) (By similarity). Does not interact with RGS2 (By similarity). Interacts with RGS8 and RGS10; this strongly enhances the intrinsic GTPase activity (By similarity). Interacts with RGS16; this strongly enhances the intrinsic GTPase activity (By similarity). Interacts with RGS12 (By similarity). Interacts (via active GTP- or inactive GDP-bound form) with RGS14 (By similarity). Interacts (via active GTP-bound form) with TRPC5 (via ANK repeats) in a homotetrameric ion channel; the interaction is direct and activates the channel activity (By similarity).</text>
</comment>
<comment type="subcellular location">
    <subcellularLocation>
        <location evidence="3">Cytoplasm</location>
    </subcellularLocation>
    <subcellularLocation>
        <location evidence="3">Cell membrane</location>
        <topology evidence="7">Lipid-anchor</topology>
    </subcellularLocation>
    <subcellularLocation>
        <location evidence="3">Cytoplasm</location>
        <location evidence="3">Cytoskeleton</location>
        <location evidence="3">Microtubule organizing center</location>
        <location evidence="3">Centrosome</location>
    </subcellularLocation>
    <text evidence="3">Localizes in the centrosomes of interphase and mitotic cells. Detected at the cleavage furrow and/or the midbody.</text>
</comment>
<comment type="tissue specificity">
    <text evidence="6">Ubiquitously expressed.</text>
</comment>
<comment type="similarity">
    <text evidence="7">Belongs to the G-alpha family. G(i/o/t/z) subfamily.</text>
</comment>
<gene>
    <name type="primary">GNAI3</name>
</gene>
<evidence type="ECO:0000250" key="1"/>
<evidence type="ECO:0000250" key="2">
    <source>
        <dbReference type="UniProtKB" id="P08753"/>
    </source>
</evidence>
<evidence type="ECO:0000250" key="3">
    <source>
        <dbReference type="UniProtKB" id="P08754"/>
    </source>
</evidence>
<evidence type="ECO:0000250" key="4">
    <source>
        <dbReference type="UniProtKB" id="Q9DC51"/>
    </source>
</evidence>
<evidence type="ECO:0000255" key="5">
    <source>
        <dbReference type="PROSITE-ProRule" id="PRU01230"/>
    </source>
</evidence>
<evidence type="ECO:0000269" key="6">
    <source>
    </source>
</evidence>
<evidence type="ECO:0000305" key="7"/>
<reference key="1">
    <citation type="journal article" date="1992" name="Biochim. Biophys. Acta">
        <title>Three types of Gi alpha protein of the guinea-pig lung: cDNA cloning and analysis of their tissue distribution.</title>
        <authorList>
            <person name="Sakanaka C."/>
            <person name="Izumi T."/>
            <person name="Nakamura M."/>
            <person name="Honda Z."/>
            <person name="Watanabe T."/>
            <person name="Minami M."/>
            <person name="Mutoh H."/>
            <person name="Bito H."/>
            <person name="Seyama Y."/>
            <person name="Ui M."/>
            <person name="Shimizu T."/>
        </authorList>
    </citation>
    <scope>NUCLEOTIDE SEQUENCE [MRNA]</scope>
    <scope>TISSUE SPECIFICITY</scope>
    <source>
        <strain>Hartley</strain>
        <tissue>Lung</tissue>
    </source>
</reference>
<proteinExistence type="evidence at transcript level"/>
<accession>P38403</accession>
<sequence>MGCTLSAEDKAAVERSKMIDRNLREDGEKAAKEVKLLLLGAGESGKSTIVKQMKIIHEDGYSEEECKQYKVVVYSNTIQSIIAIIRAMGRLKIDFGEPARADDARQLFVLAGSAEEGLMTSELAGVIRRLWRDGGVQACFSRSREYQLNDSASYYLNDLDRISQTNYIPTQQDVLRTRVKTTGIVETHFTFKDLYFKMFDVGGQRSERKKWIHCFEGVTAIIFCVALSDYDLVLAEDEEMNRMHESMKLFDSICNNKWFTDTSIILFLNKKDLFEEKIKRSPLTICYPEYTGSNTYEEAAAYIQCQFEDLNRRKDTKEIYTHFTCATDTKNVQFVFDAVTDVIIKNNLKECGLY</sequence>
<name>GNAI3_CAVPO</name>
<protein>
    <recommendedName>
        <fullName>Guanine nucleotide-binding protein G(i) subunit alpha-3</fullName>
    </recommendedName>
    <alternativeName>
        <fullName>G(i) alpha-3</fullName>
    </alternativeName>
</protein>
<organism>
    <name type="scientific">Cavia porcellus</name>
    <name type="common">Guinea pig</name>
    <dbReference type="NCBI Taxonomy" id="10141"/>
    <lineage>
        <taxon>Eukaryota</taxon>
        <taxon>Metazoa</taxon>
        <taxon>Chordata</taxon>
        <taxon>Craniata</taxon>
        <taxon>Vertebrata</taxon>
        <taxon>Euteleostomi</taxon>
        <taxon>Mammalia</taxon>
        <taxon>Eutheria</taxon>
        <taxon>Euarchontoglires</taxon>
        <taxon>Glires</taxon>
        <taxon>Rodentia</taxon>
        <taxon>Hystricomorpha</taxon>
        <taxon>Caviidae</taxon>
        <taxon>Cavia</taxon>
    </lineage>
</organism>
<keyword id="KW-0131">Cell cycle</keyword>
<keyword id="KW-0132">Cell division</keyword>
<keyword id="KW-1003">Cell membrane</keyword>
<keyword id="KW-0963">Cytoplasm</keyword>
<keyword id="KW-0206">Cytoskeleton</keyword>
<keyword id="KW-0342">GTP-binding</keyword>
<keyword id="KW-0449">Lipoprotein</keyword>
<keyword id="KW-0460">Magnesium</keyword>
<keyword id="KW-0472">Membrane</keyword>
<keyword id="KW-0479">Metal-binding</keyword>
<keyword id="KW-0519">Myristate</keyword>
<keyword id="KW-0547">Nucleotide-binding</keyword>
<keyword id="KW-0564">Palmitate</keyword>
<keyword id="KW-1185">Reference proteome</keyword>
<keyword id="KW-0807">Transducer</keyword>
<dbReference type="EMBL" id="D21234">
    <property type="protein sequence ID" value="BAA04766.1"/>
    <property type="molecule type" value="mRNA"/>
</dbReference>
<dbReference type="PIR" id="S28159">
    <property type="entry name" value="S28159"/>
</dbReference>
<dbReference type="RefSeq" id="NP_001166426.1">
    <property type="nucleotide sequence ID" value="NM_001172955.1"/>
</dbReference>
<dbReference type="RefSeq" id="XP_005007809.1">
    <property type="nucleotide sequence ID" value="XM_005007752.2"/>
</dbReference>
<dbReference type="BMRB" id="P38403"/>
<dbReference type="SMR" id="P38403"/>
<dbReference type="FunCoup" id="P38403">
    <property type="interactions" value="4330"/>
</dbReference>
<dbReference type="STRING" id="10141.ENSCPOP00000010346"/>
<dbReference type="Ensembl" id="ENSCPOT00000011611.3">
    <property type="protein sequence ID" value="ENSCPOP00000010346.2"/>
    <property type="gene ID" value="ENSCPOG00000011504.4"/>
</dbReference>
<dbReference type="GeneID" id="100135530"/>
<dbReference type="KEGG" id="cpoc:100135530"/>
<dbReference type="CTD" id="2773"/>
<dbReference type="VEuPathDB" id="HostDB:ENSCPOG00000011504"/>
<dbReference type="eggNOG" id="KOG0082">
    <property type="taxonomic scope" value="Eukaryota"/>
</dbReference>
<dbReference type="GeneTree" id="ENSGT00940000153567"/>
<dbReference type="HOGENOM" id="CLU_014184_6_0_1"/>
<dbReference type="InParanoid" id="P38403"/>
<dbReference type="OMA" id="MRIIHDV"/>
<dbReference type="OrthoDB" id="5817230at2759"/>
<dbReference type="TreeFam" id="TF300673"/>
<dbReference type="Proteomes" id="UP000005447">
    <property type="component" value="Unassembled WGS sequence"/>
</dbReference>
<dbReference type="Bgee" id="ENSCPOG00000011504">
    <property type="expression patterns" value="Expressed in zone of skin and 13 other cell types or tissues"/>
</dbReference>
<dbReference type="GO" id="GO:0034451">
    <property type="term" value="C:centriolar satellite"/>
    <property type="evidence" value="ECO:0007669"/>
    <property type="project" value="Ensembl"/>
</dbReference>
<dbReference type="GO" id="GO:0005813">
    <property type="term" value="C:centrosome"/>
    <property type="evidence" value="ECO:0000250"/>
    <property type="project" value="UniProtKB"/>
</dbReference>
<dbReference type="GO" id="GO:0036064">
    <property type="term" value="C:ciliary basal body"/>
    <property type="evidence" value="ECO:0007669"/>
    <property type="project" value="Ensembl"/>
</dbReference>
<dbReference type="GO" id="GO:0005737">
    <property type="term" value="C:cytoplasm"/>
    <property type="evidence" value="ECO:0000250"/>
    <property type="project" value="UniProtKB"/>
</dbReference>
<dbReference type="GO" id="GO:0005829">
    <property type="term" value="C:cytosol"/>
    <property type="evidence" value="ECO:0007669"/>
    <property type="project" value="Ensembl"/>
</dbReference>
<dbReference type="GO" id="GO:0005789">
    <property type="term" value="C:endoplasmic reticulum membrane"/>
    <property type="evidence" value="ECO:0007669"/>
    <property type="project" value="Ensembl"/>
</dbReference>
<dbReference type="GO" id="GO:0000139">
    <property type="term" value="C:Golgi membrane"/>
    <property type="evidence" value="ECO:0007669"/>
    <property type="project" value="Ensembl"/>
</dbReference>
<dbReference type="GO" id="GO:0005834">
    <property type="term" value="C:heterotrimeric G-protein complex"/>
    <property type="evidence" value="ECO:0007669"/>
    <property type="project" value="TreeGrafter"/>
</dbReference>
<dbReference type="GO" id="GO:0030496">
    <property type="term" value="C:midbody"/>
    <property type="evidence" value="ECO:0000250"/>
    <property type="project" value="UniProtKB"/>
</dbReference>
<dbReference type="GO" id="GO:0005730">
    <property type="term" value="C:nucleolus"/>
    <property type="evidence" value="ECO:0007669"/>
    <property type="project" value="Ensembl"/>
</dbReference>
<dbReference type="GO" id="GO:0005654">
    <property type="term" value="C:nucleoplasm"/>
    <property type="evidence" value="ECO:0007669"/>
    <property type="project" value="Ensembl"/>
</dbReference>
<dbReference type="GO" id="GO:0005886">
    <property type="term" value="C:plasma membrane"/>
    <property type="evidence" value="ECO:0000250"/>
    <property type="project" value="UniProtKB"/>
</dbReference>
<dbReference type="GO" id="GO:0001664">
    <property type="term" value="F:G protein-coupled receptor binding"/>
    <property type="evidence" value="ECO:0007669"/>
    <property type="project" value="TreeGrafter"/>
</dbReference>
<dbReference type="GO" id="GO:0031683">
    <property type="term" value="F:G-protein beta/gamma-subunit complex binding"/>
    <property type="evidence" value="ECO:0007669"/>
    <property type="project" value="InterPro"/>
</dbReference>
<dbReference type="GO" id="GO:0019003">
    <property type="term" value="F:GDP binding"/>
    <property type="evidence" value="ECO:0000250"/>
    <property type="project" value="UniProtKB"/>
</dbReference>
<dbReference type="GO" id="GO:0005525">
    <property type="term" value="F:GTP binding"/>
    <property type="evidence" value="ECO:0007669"/>
    <property type="project" value="UniProtKB-KW"/>
</dbReference>
<dbReference type="GO" id="GO:0003924">
    <property type="term" value="F:GTPase activity"/>
    <property type="evidence" value="ECO:0000250"/>
    <property type="project" value="UniProtKB"/>
</dbReference>
<dbReference type="GO" id="GO:0046872">
    <property type="term" value="F:metal ion binding"/>
    <property type="evidence" value="ECO:0007669"/>
    <property type="project" value="UniProtKB-KW"/>
</dbReference>
<dbReference type="GO" id="GO:0007193">
    <property type="term" value="P:adenylate cyclase-inhibiting G protein-coupled receptor signaling pathway"/>
    <property type="evidence" value="ECO:0000250"/>
    <property type="project" value="UniProtKB"/>
</dbReference>
<dbReference type="GO" id="GO:0051301">
    <property type="term" value="P:cell division"/>
    <property type="evidence" value="ECO:0000250"/>
    <property type="project" value="UniProtKB"/>
</dbReference>
<dbReference type="GO" id="GO:0007212">
    <property type="term" value="P:G protein-coupled dopamine receptor signaling pathway"/>
    <property type="evidence" value="ECO:0007669"/>
    <property type="project" value="TreeGrafter"/>
</dbReference>
<dbReference type="GO" id="GO:0046039">
    <property type="term" value="P:GTP metabolic process"/>
    <property type="evidence" value="ECO:0000250"/>
    <property type="project" value="UniProtKB"/>
</dbReference>
<dbReference type="GO" id="GO:0016239">
    <property type="term" value="P:positive regulation of macroautophagy"/>
    <property type="evidence" value="ECO:0007669"/>
    <property type="project" value="Ensembl"/>
</dbReference>
<dbReference type="CDD" id="cd00066">
    <property type="entry name" value="G-alpha"/>
    <property type="match status" value="1"/>
</dbReference>
<dbReference type="FunFam" id="1.10.400.10:FF:000001">
    <property type="entry name" value="Guanine nucleotide-binding protein G(I) subunit alpha"/>
    <property type="match status" value="1"/>
</dbReference>
<dbReference type="FunFam" id="3.40.50.300:FF:002487">
    <property type="entry name" value="Guanine nucleotide-binding protein G(i) subunit alpha-1"/>
    <property type="match status" value="1"/>
</dbReference>
<dbReference type="FunFam" id="3.40.50.300:FF:003559">
    <property type="entry name" value="Guanine nucleotide-binding protein G(i) subunit alpha-1"/>
    <property type="match status" value="1"/>
</dbReference>
<dbReference type="Gene3D" id="1.10.400.10">
    <property type="entry name" value="GI Alpha 1, domain 2-like"/>
    <property type="match status" value="1"/>
</dbReference>
<dbReference type="Gene3D" id="3.40.50.300">
    <property type="entry name" value="P-loop containing nucleotide triphosphate hydrolases"/>
    <property type="match status" value="1"/>
</dbReference>
<dbReference type="InterPro" id="IPR001408">
    <property type="entry name" value="Gprotein_alpha_I"/>
</dbReference>
<dbReference type="InterPro" id="IPR001019">
    <property type="entry name" value="Gprotein_alpha_su"/>
</dbReference>
<dbReference type="InterPro" id="IPR011025">
    <property type="entry name" value="GproteinA_insert"/>
</dbReference>
<dbReference type="InterPro" id="IPR027417">
    <property type="entry name" value="P-loop_NTPase"/>
</dbReference>
<dbReference type="PANTHER" id="PTHR10218">
    <property type="entry name" value="GTP-BINDING PROTEIN ALPHA SUBUNIT"/>
    <property type="match status" value="1"/>
</dbReference>
<dbReference type="PANTHER" id="PTHR10218:SF230">
    <property type="entry name" value="GUANINE NUCLEOTIDE-BINDING PROTEIN G(I) SUBUNIT ALPHA-3"/>
    <property type="match status" value="1"/>
</dbReference>
<dbReference type="Pfam" id="PF00503">
    <property type="entry name" value="G-alpha"/>
    <property type="match status" value="1"/>
</dbReference>
<dbReference type="PRINTS" id="PR00318">
    <property type="entry name" value="GPROTEINA"/>
</dbReference>
<dbReference type="PRINTS" id="PR00441">
    <property type="entry name" value="GPROTEINAI"/>
</dbReference>
<dbReference type="SMART" id="SM00275">
    <property type="entry name" value="G_alpha"/>
    <property type="match status" value="1"/>
</dbReference>
<dbReference type="SUPFAM" id="SSF52540">
    <property type="entry name" value="P-loop containing nucleoside triphosphate hydrolases"/>
    <property type="match status" value="1"/>
</dbReference>
<dbReference type="SUPFAM" id="SSF47895">
    <property type="entry name" value="Transducin (alpha subunit), insertion domain"/>
    <property type="match status" value="1"/>
</dbReference>
<dbReference type="PROSITE" id="PS51882">
    <property type="entry name" value="G_ALPHA"/>
    <property type="match status" value="1"/>
</dbReference>